<feature type="initiator methionine" description="Removed" evidence="1">
    <location>
        <position position="1"/>
    </location>
</feature>
<feature type="chain" id="PRO_0000310755" description="THO complex subunit 7 homolog">
    <location>
        <begin position="2"/>
        <end position="204"/>
    </location>
</feature>
<feature type="region of interest" description="Interaction with THOC5" evidence="1">
    <location>
        <begin position="50"/>
        <end position="137"/>
    </location>
</feature>
<feature type="region of interest" description="Interaction with NIF3L1" evidence="1">
    <location>
        <begin position="105"/>
        <end position="204"/>
    </location>
</feature>
<feature type="region of interest" description="Disordered" evidence="2">
    <location>
        <begin position="182"/>
        <end position="204"/>
    </location>
</feature>
<feature type="coiled-coil region" evidence="1">
    <location>
        <begin position="146"/>
        <end position="204"/>
    </location>
</feature>
<feature type="modified residue" description="N-acetylglycine" evidence="1">
    <location>
        <position position="2"/>
    </location>
</feature>
<feature type="modified residue" description="Phosphothreonine" evidence="1">
    <location>
        <position position="5"/>
    </location>
</feature>
<feature type="modified residue" description="N6-acetyllysine" evidence="1">
    <location>
        <position position="36"/>
    </location>
</feature>
<feature type="splice variant" id="VSP_029326" description="In isoform 2." evidence="5 6">
    <location>
        <begin position="138"/>
        <end position="204"/>
    </location>
</feature>
<feature type="sequence conflict" description="In Ref. 2; AAH54419." evidence="7" ref="2">
    <original>V</original>
    <variation>M</variation>
    <location>
        <position position="125"/>
    </location>
</feature>
<accession>Q7TMY4</accession>
<accession>Q3UIA6</accession>
<accession>Q80VT4</accession>
<accession>Q9CQ50</accession>
<reference key="1">
    <citation type="journal article" date="2005" name="Science">
        <title>The transcriptional landscape of the mammalian genome.</title>
        <authorList>
            <person name="Carninci P."/>
            <person name="Kasukawa T."/>
            <person name="Katayama S."/>
            <person name="Gough J."/>
            <person name="Frith M.C."/>
            <person name="Maeda N."/>
            <person name="Oyama R."/>
            <person name="Ravasi T."/>
            <person name="Lenhard B."/>
            <person name="Wells C."/>
            <person name="Kodzius R."/>
            <person name="Shimokawa K."/>
            <person name="Bajic V.B."/>
            <person name="Brenner S.E."/>
            <person name="Batalov S."/>
            <person name="Forrest A.R."/>
            <person name="Zavolan M."/>
            <person name="Davis M.J."/>
            <person name="Wilming L.G."/>
            <person name="Aidinis V."/>
            <person name="Allen J.E."/>
            <person name="Ambesi-Impiombato A."/>
            <person name="Apweiler R."/>
            <person name="Aturaliya R.N."/>
            <person name="Bailey T.L."/>
            <person name="Bansal M."/>
            <person name="Baxter L."/>
            <person name="Beisel K.W."/>
            <person name="Bersano T."/>
            <person name="Bono H."/>
            <person name="Chalk A.M."/>
            <person name="Chiu K.P."/>
            <person name="Choudhary V."/>
            <person name="Christoffels A."/>
            <person name="Clutterbuck D.R."/>
            <person name="Crowe M.L."/>
            <person name="Dalla E."/>
            <person name="Dalrymple B.P."/>
            <person name="de Bono B."/>
            <person name="Della Gatta G."/>
            <person name="di Bernardo D."/>
            <person name="Down T."/>
            <person name="Engstrom P."/>
            <person name="Fagiolini M."/>
            <person name="Faulkner G."/>
            <person name="Fletcher C.F."/>
            <person name="Fukushima T."/>
            <person name="Furuno M."/>
            <person name="Futaki S."/>
            <person name="Gariboldi M."/>
            <person name="Georgii-Hemming P."/>
            <person name="Gingeras T.R."/>
            <person name="Gojobori T."/>
            <person name="Green R.E."/>
            <person name="Gustincich S."/>
            <person name="Harbers M."/>
            <person name="Hayashi Y."/>
            <person name="Hensch T.K."/>
            <person name="Hirokawa N."/>
            <person name="Hill D."/>
            <person name="Huminiecki L."/>
            <person name="Iacono M."/>
            <person name="Ikeo K."/>
            <person name="Iwama A."/>
            <person name="Ishikawa T."/>
            <person name="Jakt M."/>
            <person name="Kanapin A."/>
            <person name="Katoh M."/>
            <person name="Kawasawa Y."/>
            <person name="Kelso J."/>
            <person name="Kitamura H."/>
            <person name="Kitano H."/>
            <person name="Kollias G."/>
            <person name="Krishnan S.P."/>
            <person name="Kruger A."/>
            <person name="Kummerfeld S.K."/>
            <person name="Kurochkin I.V."/>
            <person name="Lareau L.F."/>
            <person name="Lazarevic D."/>
            <person name="Lipovich L."/>
            <person name="Liu J."/>
            <person name="Liuni S."/>
            <person name="McWilliam S."/>
            <person name="Madan Babu M."/>
            <person name="Madera M."/>
            <person name="Marchionni L."/>
            <person name="Matsuda H."/>
            <person name="Matsuzawa S."/>
            <person name="Miki H."/>
            <person name="Mignone F."/>
            <person name="Miyake S."/>
            <person name="Morris K."/>
            <person name="Mottagui-Tabar S."/>
            <person name="Mulder N."/>
            <person name="Nakano N."/>
            <person name="Nakauchi H."/>
            <person name="Ng P."/>
            <person name="Nilsson R."/>
            <person name="Nishiguchi S."/>
            <person name="Nishikawa S."/>
            <person name="Nori F."/>
            <person name="Ohara O."/>
            <person name="Okazaki Y."/>
            <person name="Orlando V."/>
            <person name="Pang K.C."/>
            <person name="Pavan W.J."/>
            <person name="Pavesi G."/>
            <person name="Pesole G."/>
            <person name="Petrovsky N."/>
            <person name="Piazza S."/>
            <person name="Reed J."/>
            <person name="Reid J.F."/>
            <person name="Ring B.Z."/>
            <person name="Ringwald M."/>
            <person name="Rost B."/>
            <person name="Ruan Y."/>
            <person name="Salzberg S.L."/>
            <person name="Sandelin A."/>
            <person name="Schneider C."/>
            <person name="Schoenbach C."/>
            <person name="Sekiguchi K."/>
            <person name="Semple C.A."/>
            <person name="Seno S."/>
            <person name="Sessa L."/>
            <person name="Sheng Y."/>
            <person name="Shibata Y."/>
            <person name="Shimada H."/>
            <person name="Shimada K."/>
            <person name="Silva D."/>
            <person name="Sinclair B."/>
            <person name="Sperling S."/>
            <person name="Stupka E."/>
            <person name="Sugiura K."/>
            <person name="Sultana R."/>
            <person name="Takenaka Y."/>
            <person name="Taki K."/>
            <person name="Tammoja K."/>
            <person name="Tan S.L."/>
            <person name="Tang S."/>
            <person name="Taylor M.S."/>
            <person name="Tegner J."/>
            <person name="Teichmann S.A."/>
            <person name="Ueda H.R."/>
            <person name="van Nimwegen E."/>
            <person name="Verardo R."/>
            <person name="Wei C.L."/>
            <person name="Yagi K."/>
            <person name="Yamanishi H."/>
            <person name="Zabarovsky E."/>
            <person name="Zhu S."/>
            <person name="Zimmer A."/>
            <person name="Hide W."/>
            <person name="Bult C."/>
            <person name="Grimmond S.M."/>
            <person name="Teasdale R.D."/>
            <person name="Liu E.T."/>
            <person name="Brusic V."/>
            <person name="Quackenbush J."/>
            <person name="Wahlestedt C."/>
            <person name="Mattick J.S."/>
            <person name="Hume D.A."/>
            <person name="Kai C."/>
            <person name="Sasaki D."/>
            <person name="Tomaru Y."/>
            <person name="Fukuda S."/>
            <person name="Kanamori-Katayama M."/>
            <person name="Suzuki M."/>
            <person name="Aoki J."/>
            <person name="Arakawa T."/>
            <person name="Iida J."/>
            <person name="Imamura K."/>
            <person name="Itoh M."/>
            <person name="Kato T."/>
            <person name="Kawaji H."/>
            <person name="Kawagashira N."/>
            <person name="Kawashima T."/>
            <person name="Kojima M."/>
            <person name="Kondo S."/>
            <person name="Konno H."/>
            <person name="Nakano K."/>
            <person name="Ninomiya N."/>
            <person name="Nishio T."/>
            <person name="Okada M."/>
            <person name="Plessy C."/>
            <person name="Shibata K."/>
            <person name="Shiraki T."/>
            <person name="Suzuki S."/>
            <person name="Tagami M."/>
            <person name="Waki K."/>
            <person name="Watahiki A."/>
            <person name="Okamura-Oho Y."/>
            <person name="Suzuki H."/>
            <person name="Kawai J."/>
            <person name="Hayashizaki Y."/>
        </authorList>
    </citation>
    <scope>NUCLEOTIDE SEQUENCE [LARGE SCALE MRNA] (ISOFORMS 1 AND 2)</scope>
    <source>
        <strain>C57BL/6J</strain>
        <tissue>Cerebellum</tissue>
        <tissue>Kidney</tissue>
        <tissue>Liver</tissue>
        <tissue>Pancreas</tissue>
    </source>
</reference>
<reference key="2">
    <citation type="journal article" date="2004" name="Genome Res.">
        <title>The status, quality, and expansion of the NIH full-length cDNA project: the Mammalian Gene Collection (MGC).</title>
        <authorList>
            <consortium name="The MGC Project Team"/>
        </authorList>
    </citation>
    <scope>NUCLEOTIDE SEQUENCE [LARGE SCALE MRNA] (ISOFORMS 1 AND 2)</scope>
    <source>
        <strain>Czech II</strain>
        <strain>FVB/N</strain>
        <tissue>Brain</tissue>
        <tissue>Mammary tumor</tissue>
    </source>
</reference>
<reference key="3">
    <citation type="submission" date="2009-01" db="UniProtKB">
        <authorList>
            <person name="Lubec G."/>
            <person name="Sunyer B."/>
            <person name="Chen W.-Q."/>
        </authorList>
    </citation>
    <scope>PROTEIN SEQUENCE OF 27-32</scope>
    <scope>IDENTIFICATION BY MASS SPECTROMETRY</scope>
    <source>
        <strain>OF1</strain>
        <tissue>Hippocampus</tissue>
    </source>
</reference>
<reference key="4">
    <citation type="journal article" date="2003" name="Biochem. Biophys. Res. Commun.">
        <title>Identification and characterization of NIF3L1 BP1, a novel cytoplasmic interaction partner of the NIF3L1 protein.</title>
        <authorList>
            <person name="Tascou S."/>
            <person name="Kang T.W."/>
            <person name="Trappe R."/>
            <person name="Engel W."/>
            <person name="Burfeind P."/>
        </authorList>
    </citation>
    <scope>IDENTIFICATION (ISOFORMS 1 AND 2)</scope>
    <scope>INTERACTION WITH NIF3L1</scope>
    <scope>TISSUE SPECIFICITY</scope>
</reference>
<reference key="5">
    <citation type="journal article" date="2006" name="Int. J. Mol. Med.">
        <title>Gene expression in mouse spermatogenesis during ontogenesis.</title>
        <authorList>
            <person name="Giuffrida V."/>
            <person name="Pezzino F.M."/>
            <person name="Romano F."/>
            <person name="Litrico L."/>
            <person name="Garofalo M.R."/>
            <person name="Nicotra G."/>
            <person name="Libra M."/>
            <person name="D'Amico F."/>
            <person name="Castrogiovanni P."/>
            <person name="Imbesi R."/>
            <person name="Averna M."/>
            <person name="Sanfilippo S."/>
            <person name="D'Agata R."/>
            <person name="Vicari E."/>
            <person name="Calogero A.E."/>
            <person name="Travali S."/>
        </authorList>
    </citation>
    <scope>DEVELOPMENTAL STAGE</scope>
</reference>
<reference key="6">
    <citation type="journal article" date="2010" name="Cell">
        <title>A tissue-specific atlas of mouse protein phosphorylation and expression.</title>
        <authorList>
            <person name="Huttlin E.L."/>
            <person name="Jedrychowski M.P."/>
            <person name="Elias J.E."/>
            <person name="Goswami T."/>
            <person name="Rad R."/>
            <person name="Beausoleil S.A."/>
            <person name="Villen J."/>
            <person name="Haas W."/>
            <person name="Sowa M.E."/>
            <person name="Gygi S.P."/>
        </authorList>
    </citation>
    <scope>IDENTIFICATION BY MASS SPECTROMETRY [LARGE SCALE ANALYSIS]</scope>
    <source>
        <tissue>Spleen</tissue>
    </source>
</reference>
<protein>
    <recommendedName>
        <fullName>THO complex subunit 7 homolog</fullName>
    </recommendedName>
    <alternativeName>
        <fullName>Ngg1-interacting factor 3-like protein 1-binding protein 1</fullName>
    </alternativeName>
</protein>
<dbReference type="EMBL" id="AK005176">
    <property type="protein sequence ID" value="BAB23863.1"/>
    <property type="molecule type" value="mRNA"/>
</dbReference>
<dbReference type="EMBL" id="AK007440">
    <property type="protein sequence ID" value="BAB25040.1"/>
    <property type="molecule type" value="mRNA"/>
</dbReference>
<dbReference type="EMBL" id="AK010958">
    <property type="protein sequence ID" value="BAB27291.1"/>
    <property type="molecule type" value="mRNA"/>
</dbReference>
<dbReference type="EMBL" id="AK147003">
    <property type="protein sequence ID" value="BAE27600.1"/>
    <property type="molecule type" value="mRNA"/>
</dbReference>
<dbReference type="EMBL" id="AK013319">
    <property type="status" value="NOT_ANNOTATED_CDS"/>
    <property type="molecule type" value="mRNA"/>
</dbReference>
<dbReference type="EMBL" id="BC042209">
    <property type="protein sequence ID" value="AAH42209.1"/>
    <property type="status" value="ALT_INIT"/>
    <property type="molecule type" value="mRNA"/>
</dbReference>
<dbReference type="EMBL" id="BC054419">
    <property type="protein sequence ID" value="AAH54419.1"/>
    <property type="molecule type" value="mRNA"/>
</dbReference>
<dbReference type="EMBL" id="BC116919">
    <property type="protein sequence ID" value="AAI16920.1"/>
    <property type="molecule type" value="mRNA"/>
</dbReference>
<dbReference type="EMBL" id="BC116945">
    <property type="protein sequence ID" value="AAI16946.1"/>
    <property type="molecule type" value="mRNA"/>
</dbReference>
<dbReference type="EMBL" id="BF179247">
    <property type="status" value="NOT_ANNOTATED_CDS"/>
    <property type="molecule type" value="mRNA"/>
</dbReference>
<dbReference type="CCDS" id="CCDS49403.1">
    <molecule id="Q7TMY4-1"/>
</dbReference>
<dbReference type="RefSeq" id="NP_001272709.1">
    <property type="nucleotide sequence ID" value="NM_001285780.1"/>
</dbReference>
<dbReference type="RefSeq" id="NP_079711.1">
    <molecule id="Q7TMY4-1"/>
    <property type="nucleotide sequence ID" value="NM_025435.4"/>
</dbReference>
<dbReference type="SMR" id="Q7TMY4"/>
<dbReference type="BioGRID" id="211313">
    <property type="interactions" value="1"/>
</dbReference>
<dbReference type="FunCoup" id="Q7TMY4">
    <property type="interactions" value="3169"/>
</dbReference>
<dbReference type="IntAct" id="Q7TMY4">
    <property type="interactions" value="6"/>
</dbReference>
<dbReference type="MINT" id="Q7TMY4"/>
<dbReference type="STRING" id="10090.ENSMUSP00000065819"/>
<dbReference type="iPTMnet" id="Q7TMY4"/>
<dbReference type="PhosphoSitePlus" id="Q7TMY4"/>
<dbReference type="PaxDb" id="10090-ENSMUSP00000065819"/>
<dbReference type="PeptideAtlas" id="Q7TMY4"/>
<dbReference type="ProteomicsDB" id="262979">
    <molecule id="Q7TMY4-1"/>
</dbReference>
<dbReference type="ProteomicsDB" id="262980">
    <molecule id="Q7TMY4-2"/>
</dbReference>
<dbReference type="Pumba" id="Q7TMY4"/>
<dbReference type="Antibodypedia" id="46357">
    <property type="antibodies" value="122 antibodies from 23 providers"/>
</dbReference>
<dbReference type="DNASU" id="66231"/>
<dbReference type="Ensembl" id="ENSMUST00000065865.10">
    <molecule id="Q7TMY4-1"/>
    <property type="protein sequence ID" value="ENSMUSP00000065819.9"/>
    <property type="gene ID" value="ENSMUSG00000053453.10"/>
</dbReference>
<dbReference type="GeneID" id="66231"/>
<dbReference type="KEGG" id="mmu:66231"/>
<dbReference type="UCSC" id="uc007sge.2">
    <molecule id="Q7TMY4-1"/>
    <property type="organism name" value="mouse"/>
</dbReference>
<dbReference type="AGR" id="MGI:1913481"/>
<dbReference type="CTD" id="80145"/>
<dbReference type="MGI" id="MGI:1913481">
    <property type="gene designation" value="Thoc7"/>
</dbReference>
<dbReference type="VEuPathDB" id="HostDB:ENSMUSG00000053453"/>
<dbReference type="eggNOG" id="KOG3215">
    <property type="taxonomic scope" value="Eukaryota"/>
</dbReference>
<dbReference type="GeneTree" id="ENSGT00390000002873"/>
<dbReference type="HOGENOM" id="CLU_087727_0_0_1"/>
<dbReference type="InParanoid" id="Q7TMY4"/>
<dbReference type="OMA" id="WANSKND"/>
<dbReference type="OrthoDB" id="205166at2759"/>
<dbReference type="PhylomeDB" id="Q7TMY4"/>
<dbReference type="TreeFam" id="TF319308"/>
<dbReference type="Reactome" id="R-MMU-159236">
    <property type="pathway name" value="Transport of Mature mRNA derived from an Intron-Containing Transcript"/>
</dbReference>
<dbReference type="Reactome" id="R-MMU-72187">
    <property type="pathway name" value="mRNA 3'-end processing"/>
</dbReference>
<dbReference type="Reactome" id="R-MMU-73856">
    <property type="pathway name" value="RNA Polymerase II Transcription Termination"/>
</dbReference>
<dbReference type="BioGRID-ORCS" id="66231">
    <property type="hits" value="19 hits in 78 CRISPR screens"/>
</dbReference>
<dbReference type="ChiTaRS" id="Thoc7">
    <property type="organism name" value="mouse"/>
</dbReference>
<dbReference type="PRO" id="PR:Q7TMY4"/>
<dbReference type="Proteomes" id="UP000000589">
    <property type="component" value="Chromosome 14"/>
</dbReference>
<dbReference type="RNAct" id="Q7TMY4">
    <property type="molecule type" value="protein"/>
</dbReference>
<dbReference type="Bgee" id="ENSMUSG00000053453">
    <property type="expression patterns" value="Expressed in ventricular zone and 265 other cell types or tissues"/>
</dbReference>
<dbReference type="ExpressionAtlas" id="Q7TMY4">
    <property type="expression patterns" value="baseline and differential"/>
</dbReference>
<dbReference type="GO" id="GO:0000781">
    <property type="term" value="C:chromosome, telomeric region"/>
    <property type="evidence" value="ECO:0007669"/>
    <property type="project" value="Ensembl"/>
</dbReference>
<dbReference type="GO" id="GO:0005737">
    <property type="term" value="C:cytoplasm"/>
    <property type="evidence" value="ECO:0000250"/>
    <property type="project" value="UniProtKB"/>
</dbReference>
<dbReference type="GO" id="GO:0005829">
    <property type="term" value="C:cytosol"/>
    <property type="evidence" value="ECO:0007669"/>
    <property type="project" value="Ensembl"/>
</dbReference>
<dbReference type="GO" id="GO:0016607">
    <property type="term" value="C:nuclear speck"/>
    <property type="evidence" value="ECO:0007669"/>
    <property type="project" value="UniProtKB-SubCell"/>
</dbReference>
<dbReference type="GO" id="GO:0005634">
    <property type="term" value="C:nucleus"/>
    <property type="evidence" value="ECO:0000250"/>
    <property type="project" value="UniProtKB"/>
</dbReference>
<dbReference type="GO" id="GO:0000445">
    <property type="term" value="C:THO complex part of transcription export complex"/>
    <property type="evidence" value="ECO:0007669"/>
    <property type="project" value="Ensembl"/>
</dbReference>
<dbReference type="GO" id="GO:0003723">
    <property type="term" value="F:RNA binding"/>
    <property type="evidence" value="ECO:0007669"/>
    <property type="project" value="UniProtKB-KW"/>
</dbReference>
<dbReference type="GO" id="GO:0006406">
    <property type="term" value="P:mRNA export from nucleus"/>
    <property type="evidence" value="ECO:0007669"/>
    <property type="project" value="Ensembl"/>
</dbReference>
<dbReference type="GO" id="GO:0006397">
    <property type="term" value="P:mRNA processing"/>
    <property type="evidence" value="ECO:0007669"/>
    <property type="project" value="UniProtKB-KW"/>
</dbReference>
<dbReference type="GO" id="GO:0008380">
    <property type="term" value="P:RNA splicing"/>
    <property type="evidence" value="ECO:0007669"/>
    <property type="project" value="UniProtKB-KW"/>
</dbReference>
<dbReference type="InterPro" id="IPR008501">
    <property type="entry name" value="THOC7/Mft1"/>
</dbReference>
<dbReference type="PANTHER" id="PTHR23405">
    <property type="entry name" value="MAINTENANCE OF KILLER 16 MAK16 PROTEIN-RELATED"/>
    <property type="match status" value="1"/>
</dbReference>
<dbReference type="PANTHER" id="PTHR23405:SF5">
    <property type="entry name" value="THO COMPLEX SUBUNIT 7 HOMOLOG"/>
    <property type="match status" value="1"/>
</dbReference>
<dbReference type="Pfam" id="PF05615">
    <property type="entry name" value="THOC7"/>
    <property type="match status" value="1"/>
</dbReference>
<organism>
    <name type="scientific">Mus musculus</name>
    <name type="common">Mouse</name>
    <dbReference type="NCBI Taxonomy" id="10090"/>
    <lineage>
        <taxon>Eukaryota</taxon>
        <taxon>Metazoa</taxon>
        <taxon>Chordata</taxon>
        <taxon>Craniata</taxon>
        <taxon>Vertebrata</taxon>
        <taxon>Euteleostomi</taxon>
        <taxon>Mammalia</taxon>
        <taxon>Eutheria</taxon>
        <taxon>Euarchontoglires</taxon>
        <taxon>Glires</taxon>
        <taxon>Rodentia</taxon>
        <taxon>Myomorpha</taxon>
        <taxon>Muroidea</taxon>
        <taxon>Muridae</taxon>
        <taxon>Murinae</taxon>
        <taxon>Mus</taxon>
        <taxon>Mus</taxon>
    </lineage>
</organism>
<sequence>MGAVTDDEVIRKRLLIDGDGAGDDRRINLLVKSFIKWCNSGSQEEGYSQYQRMLSTLSQCEFSMGKTLLVYDMNLREMENYEKIYKEIECSIAGAHEKIAECKKQILQAKRIRKNRQEYDALAKVIQHHPDRHETLKELEALGKELEHLSHIKESVEDKLELRRKQFHVLLSTIHELQQTLENDDKLSEVDEAQESTMEADPKP</sequence>
<comment type="function">
    <text evidence="1">Component of the THO subcomplex of the TREX complex which is thought to couple mRNA transcription, processing and nuclear export, and which specifically associates with spliced mRNA and not with unspliced pre-mRNA. Required for efficient export of polyadenylated RNA. Plays a key structural role in the oligomerization of the THO-DDX39B complex. TREX is recruited to spliced mRNAs by a transcription-independent mechanism, binds to mRNA upstream of the exon-junction complex (EJC) and is recruited in a splicing- and cap-dependent manner to a region near the 5' end of the mRNA where it functions in mRNA export to the cytoplasm via the TAP/NXF1 pathway.</text>
</comment>
<comment type="subunit">
    <text evidence="1 3">Tetramer; as part of a THO-DDX39B complex. Component of the THO subcomplex, which is composed of THOC1, THOC2, THOC3, THOC5, THOC6 and THOC7. Component of the transcription/export (TREX) complex at least composed of ALYREF/THOC4, DDX39B, SARNP/CIP29, CHTOP and the THO subcomplex; in the complex interacts with THOC1, THOC2 and THOC5; forms a coiled-coil dimer with THOC5; together with THOC5 and THOC6, plays a key structural role in the oligomerization of the THO-DDX39B complex. TREX seems to have a dynamic structure involving ATP-dependent remodeling. Interacts with NIF3L1 (PubMed:12951069).</text>
</comment>
<comment type="subcellular location">
    <subcellularLocation>
        <location evidence="1">Cytoplasm</location>
    </subcellularLocation>
    <subcellularLocation>
        <location evidence="1">Nucleus</location>
    </subcellularLocation>
    <subcellularLocation>
        <location evidence="1">Nucleus speckle</location>
    </subcellularLocation>
    <text evidence="1">Interaction with THOC5 is required for nuclear localization.</text>
</comment>
<comment type="alternative products">
    <event type="alternative splicing"/>
    <isoform>
        <id>Q7TMY4-1</id>
        <name>1</name>
        <sequence type="displayed"/>
    </isoform>
    <isoform>
        <id>Q7TMY4-2</id>
        <name>2</name>
        <sequence type="described" ref="VSP_029326"/>
    </isoform>
</comment>
<comment type="tissue specificity">
    <text evidence="3">Ubiquitously expressed.</text>
</comment>
<comment type="developmental stage">
    <text evidence="4">Expressed at low levels in testis between P3 and P14. Expression in testis increases at P20 and reaches maximum levels in adult.</text>
</comment>
<comment type="similarity">
    <text evidence="7">Belongs to the THOC7 family.</text>
</comment>
<comment type="sequence caution" evidence="7">
    <conflict type="erroneous initiation">
        <sequence resource="EMBL-CDS" id="AAH42209"/>
    </conflict>
</comment>
<proteinExistence type="evidence at protein level"/>
<gene>
    <name type="primary">Thoc7</name>
    <name type="synonym">Nif3l1bp1</name>
</gene>
<keyword id="KW-0007">Acetylation</keyword>
<keyword id="KW-0025">Alternative splicing</keyword>
<keyword id="KW-0175">Coiled coil</keyword>
<keyword id="KW-0963">Cytoplasm</keyword>
<keyword id="KW-0903">Direct protein sequencing</keyword>
<keyword id="KW-0507">mRNA processing</keyword>
<keyword id="KW-0508">mRNA splicing</keyword>
<keyword id="KW-0509">mRNA transport</keyword>
<keyword id="KW-0539">Nucleus</keyword>
<keyword id="KW-0597">Phosphoprotein</keyword>
<keyword id="KW-1185">Reference proteome</keyword>
<keyword id="KW-0694">RNA-binding</keyword>
<keyword id="KW-0813">Transport</keyword>
<evidence type="ECO:0000250" key="1">
    <source>
        <dbReference type="UniProtKB" id="Q6I9Y2"/>
    </source>
</evidence>
<evidence type="ECO:0000256" key="2">
    <source>
        <dbReference type="SAM" id="MobiDB-lite"/>
    </source>
</evidence>
<evidence type="ECO:0000269" key="3">
    <source>
    </source>
</evidence>
<evidence type="ECO:0000269" key="4">
    <source>
    </source>
</evidence>
<evidence type="ECO:0000303" key="5">
    <source>
    </source>
</evidence>
<evidence type="ECO:0000303" key="6">
    <source>
    </source>
</evidence>
<evidence type="ECO:0000305" key="7"/>
<name>THOC7_MOUSE</name>